<protein>
    <recommendedName>
        <fullName evidence="2">Pimeloyl-[acyl-carrier protein] methyl ester esterase</fullName>
        <ecNumber evidence="2">3.1.1.85</ecNumber>
    </recommendedName>
    <alternativeName>
        <fullName evidence="2">Biotin synthesis protein BioH</fullName>
    </alternativeName>
    <alternativeName>
        <fullName evidence="2">Carboxylesterase BioH</fullName>
    </alternativeName>
</protein>
<organism>
    <name type="scientific">Escherichia coli (strain UTI89 / UPEC)</name>
    <dbReference type="NCBI Taxonomy" id="364106"/>
    <lineage>
        <taxon>Bacteria</taxon>
        <taxon>Pseudomonadati</taxon>
        <taxon>Pseudomonadota</taxon>
        <taxon>Gammaproteobacteria</taxon>
        <taxon>Enterobacterales</taxon>
        <taxon>Enterobacteriaceae</taxon>
        <taxon>Escherichia</taxon>
    </lineage>
</organism>
<dbReference type="EC" id="3.1.1.85" evidence="2"/>
<dbReference type="EMBL" id="CP000243">
    <property type="protein sequence ID" value="ABE09342.1"/>
    <property type="molecule type" value="Genomic_DNA"/>
</dbReference>
<dbReference type="RefSeq" id="WP_001060078.1">
    <property type="nucleotide sequence ID" value="NZ_CP064825.1"/>
</dbReference>
<dbReference type="SMR" id="Q1R5M2"/>
<dbReference type="ESTHER" id="ecoli-bioh">
    <property type="family name" value="BioH"/>
</dbReference>
<dbReference type="MEROPS" id="S33.994"/>
<dbReference type="KEGG" id="eci:UTI89_C3913"/>
<dbReference type="HOGENOM" id="CLU_020336_12_2_6"/>
<dbReference type="UniPathway" id="UPA00078"/>
<dbReference type="Proteomes" id="UP000001952">
    <property type="component" value="Chromosome"/>
</dbReference>
<dbReference type="GO" id="GO:0005737">
    <property type="term" value="C:cytoplasm"/>
    <property type="evidence" value="ECO:0007669"/>
    <property type="project" value="UniProtKB-SubCell"/>
</dbReference>
<dbReference type="GO" id="GO:0090499">
    <property type="term" value="F:pimelyl-[acyl-carrier protein] methyl ester esterase activity"/>
    <property type="evidence" value="ECO:0007669"/>
    <property type="project" value="UniProtKB-EC"/>
</dbReference>
<dbReference type="GO" id="GO:0009102">
    <property type="term" value="P:biotin biosynthetic process"/>
    <property type="evidence" value="ECO:0007669"/>
    <property type="project" value="UniProtKB-UniRule"/>
</dbReference>
<dbReference type="FunFam" id="3.40.50.1820:FF:000045">
    <property type="entry name" value="Pimeloyl-[acyl-carrier protein] methyl ester esterase"/>
    <property type="match status" value="1"/>
</dbReference>
<dbReference type="Gene3D" id="3.40.50.1820">
    <property type="entry name" value="alpha/beta hydrolase"/>
    <property type="match status" value="1"/>
</dbReference>
<dbReference type="HAMAP" id="MF_01260">
    <property type="entry name" value="Carboxylester"/>
    <property type="match status" value="1"/>
</dbReference>
<dbReference type="InterPro" id="IPR000073">
    <property type="entry name" value="AB_hydrolase_1"/>
</dbReference>
<dbReference type="InterPro" id="IPR029058">
    <property type="entry name" value="AB_hydrolase_fold"/>
</dbReference>
<dbReference type="InterPro" id="IPR010076">
    <property type="entry name" value="BioH"/>
</dbReference>
<dbReference type="InterPro" id="IPR050228">
    <property type="entry name" value="Carboxylesterase_BioH"/>
</dbReference>
<dbReference type="NCBIfam" id="TIGR01738">
    <property type="entry name" value="bioH"/>
    <property type="match status" value="1"/>
</dbReference>
<dbReference type="NCBIfam" id="NF007674">
    <property type="entry name" value="PRK10349.1"/>
    <property type="match status" value="1"/>
</dbReference>
<dbReference type="PANTHER" id="PTHR43194">
    <property type="entry name" value="HYDROLASE ALPHA/BETA FOLD FAMILY"/>
    <property type="match status" value="1"/>
</dbReference>
<dbReference type="PANTHER" id="PTHR43194:SF5">
    <property type="entry name" value="PIMELOYL-[ACYL-CARRIER PROTEIN] METHYL ESTER ESTERASE"/>
    <property type="match status" value="1"/>
</dbReference>
<dbReference type="Pfam" id="PF00561">
    <property type="entry name" value="Abhydrolase_1"/>
    <property type="match status" value="1"/>
</dbReference>
<dbReference type="SUPFAM" id="SSF53474">
    <property type="entry name" value="alpha/beta-Hydrolases"/>
    <property type="match status" value="1"/>
</dbReference>
<sequence>MNNIWWQTKGQGNVHLVLLHGWGLNAEVWRCIDEELSSHFTLHLVDLPGFGRSRGFGALSLADMAEAVLRQAPDKAIWLGWSLGGLVASQIALTHPERVQALVTVASSPCFSARDEWPGIKPDVLAGFQQQLSDDFQRTVERFLALQTMGTETARQDARALKKTVLALPMPEVDVLNGGLEILKTVDLRLPLQNVSMPFLRLYGYLDGLVPRKVVPMLDKLWPHSESYIFAKAAHAPFISHPVEFHHLLVALKQRV</sequence>
<gene>
    <name evidence="2" type="primary">bioH</name>
    <name type="ordered locus">UTI89_C3913</name>
</gene>
<proteinExistence type="inferred from homology"/>
<evidence type="ECO:0000255" key="1"/>
<evidence type="ECO:0000255" key="2">
    <source>
        <dbReference type="HAMAP-Rule" id="MF_01260"/>
    </source>
</evidence>
<accession>Q1R5M2</accession>
<comment type="function">
    <text evidence="2">The physiological role of BioH is to remove the methyl group introduced by BioC when the pimeloyl moiety is complete. It allows to synthesize pimeloyl-ACP via the fatty acid synthetic pathway through the hydrolysis of the ester bonds of pimeloyl-ACP esters.</text>
</comment>
<comment type="catalytic activity">
    <reaction evidence="2">
        <text>6-carboxyhexanoyl-[ACP] methyl ester + H2O = 6-carboxyhexanoyl-[ACP] + methanol + H(+)</text>
        <dbReference type="Rhea" id="RHEA:42700"/>
        <dbReference type="Rhea" id="RHEA-COMP:9955"/>
        <dbReference type="Rhea" id="RHEA-COMP:10186"/>
        <dbReference type="ChEBI" id="CHEBI:15377"/>
        <dbReference type="ChEBI" id="CHEBI:15378"/>
        <dbReference type="ChEBI" id="CHEBI:17790"/>
        <dbReference type="ChEBI" id="CHEBI:78846"/>
        <dbReference type="ChEBI" id="CHEBI:82735"/>
        <dbReference type="EC" id="3.1.1.85"/>
    </reaction>
</comment>
<comment type="pathway">
    <text evidence="2">Cofactor biosynthesis; biotin biosynthesis.</text>
</comment>
<comment type="subunit">
    <text evidence="2">Monomer.</text>
</comment>
<comment type="subcellular location">
    <subcellularLocation>
        <location evidence="2">Cytoplasm</location>
    </subcellularLocation>
</comment>
<comment type="similarity">
    <text evidence="2">Belongs to the AB hydrolase superfamily. Carboxylesterase BioH family.</text>
</comment>
<reference key="1">
    <citation type="journal article" date="2006" name="Proc. Natl. Acad. Sci. U.S.A.">
        <title>Identification of genes subject to positive selection in uropathogenic strains of Escherichia coli: a comparative genomics approach.</title>
        <authorList>
            <person name="Chen S.L."/>
            <person name="Hung C.-S."/>
            <person name="Xu J."/>
            <person name="Reigstad C.S."/>
            <person name="Magrini V."/>
            <person name="Sabo A."/>
            <person name="Blasiar D."/>
            <person name="Bieri T."/>
            <person name="Meyer R.R."/>
            <person name="Ozersky P."/>
            <person name="Armstrong J.R."/>
            <person name="Fulton R.S."/>
            <person name="Latreille J.P."/>
            <person name="Spieth J."/>
            <person name="Hooton T.M."/>
            <person name="Mardis E.R."/>
            <person name="Hultgren S.J."/>
            <person name="Gordon J.I."/>
        </authorList>
    </citation>
    <scope>NUCLEOTIDE SEQUENCE [LARGE SCALE GENOMIC DNA]</scope>
    <source>
        <strain>UTI89 / UPEC</strain>
    </source>
</reference>
<keyword id="KW-0093">Biotin biosynthesis</keyword>
<keyword id="KW-0963">Cytoplasm</keyword>
<keyword id="KW-0378">Hydrolase</keyword>
<keyword id="KW-0719">Serine esterase</keyword>
<feature type="chain" id="PRO_1000067268" description="Pimeloyl-[acyl-carrier protein] methyl ester esterase">
    <location>
        <begin position="1"/>
        <end position="256"/>
    </location>
</feature>
<feature type="domain" description="AB hydrolase-1" evidence="1">
    <location>
        <begin position="15"/>
        <end position="242"/>
    </location>
</feature>
<feature type="active site" description="Nucleophile" evidence="2">
    <location>
        <position position="82"/>
    </location>
</feature>
<feature type="active site" evidence="2">
    <location>
        <position position="207"/>
    </location>
</feature>
<feature type="active site" evidence="2">
    <location>
        <position position="235"/>
    </location>
</feature>
<feature type="binding site" evidence="2">
    <location>
        <position position="22"/>
    </location>
    <ligand>
        <name>substrate</name>
    </ligand>
</feature>
<feature type="binding site" evidence="2">
    <location>
        <begin position="82"/>
        <end position="83"/>
    </location>
    <ligand>
        <name>substrate</name>
    </ligand>
</feature>
<feature type="binding site" evidence="2">
    <location>
        <begin position="143"/>
        <end position="147"/>
    </location>
    <ligand>
        <name>substrate</name>
    </ligand>
</feature>
<feature type="binding site" evidence="2">
    <location>
        <position position="235"/>
    </location>
    <ligand>
        <name>substrate</name>
    </ligand>
</feature>
<name>BIOH_ECOUT</name>